<dbReference type="EC" id="5.3.1.16" evidence="1"/>
<dbReference type="EMBL" id="CP001661">
    <property type="protein sequence ID" value="ACT19815.1"/>
    <property type="molecule type" value="Genomic_DNA"/>
</dbReference>
<dbReference type="SMR" id="C6E7F5"/>
<dbReference type="STRING" id="443144.GM21_3796"/>
<dbReference type="KEGG" id="gem:GM21_3796"/>
<dbReference type="eggNOG" id="COG0106">
    <property type="taxonomic scope" value="Bacteria"/>
</dbReference>
<dbReference type="HOGENOM" id="CLU_048577_1_1_7"/>
<dbReference type="OrthoDB" id="9807749at2"/>
<dbReference type="UniPathway" id="UPA00031">
    <property type="reaction ID" value="UER00009"/>
</dbReference>
<dbReference type="GO" id="GO:0005737">
    <property type="term" value="C:cytoplasm"/>
    <property type="evidence" value="ECO:0007669"/>
    <property type="project" value="UniProtKB-SubCell"/>
</dbReference>
<dbReference type="GO" id="GO:0003949">
    <property type="term" value="F:1-(5-phosphoribosyl)-5-[(5-phosphoribosylamino)methylideneamino]imidazole-4-carboxamide isomerase activity"/>
    <property type="evidence" value="ECO:0007669"/>
    <property type="project" value="UniProtKB-UniRule"/>
</dbReference>
<dbReference type="GO" id="GO:0000105">
    <property type="term" value="P:L-histidine biosynthetic process"/>
    <property type="evidence" value="ECO:0007669"/>
    <property type="project" value="UniProtKB-UniRule"/>
</dbReference>
<dbReference type="GO" id="GO:0000162">
    <property type="term" value="P:L-tryptophan biosynthetic process"/>
    <property type="evidence" value="ECO:0007669"/>
    <property type="project" value="TreeGrafter"/>
</dbReference>
<dbReference type="CDD" id="cd04732">
    <property type="entry name" value="HisA"/>
    <property type="match status" value="1"/>
</dbReference>
<dbReference type="FunFam" id="3.20.20.70:FF:000009">
    <property type="entry name" value="1-(5-phosphoribosyl)-5-[(5-phosphoribosylamino)methylideneamino] imidazole-4-carboxamide isomerase"/>
    <property type="match status" value="1"/>
</dbReference>
<dbReference type="Gene3D" id="3.20.20.70">
    <property type="entry name" value="Aldolase class I"/>
    <property type="match status" value="1"/>
</dbReference>
<dbReference type="HAMAP" id="MF_01014">
    <property type="entry name" value="HisA"/>
    <property type="match status" value="1"/>
</dbReference>
<dbReference type="InterPro" id="IPR013785">
    <property type="entry name" value="Aldolase_TIM"/>
</dbReference>
<dbReference type="InterPro" id="IPR006062">
    <property type="entry name" value="His_biosynth"/>
</dbReference>
<dbReference type="InterPro" id="IPR006063">
    <property type="entry name" value="HisA_bact_arch"/>
</dbReference>
<dbReference type="InterPro" id="IPR044524">
    <property type="entry name" value="Isoase_HisA-like"/>
</dbReference>
<dbReference type="InterPro" id="IPR023016">
    <property type="entry name" value="Isoase_HisA-like_bact"/>
</dbReference>
<dbReference type="InterPro" id="IPR011060">
    <property type="entry name" value="RibuloseP-bd_barrel"/>
</dbReference>
<dbReference type="NCBIfam" id="TIGR00007">
    <property type="entry name" value="1-(5-phosphoribosyl)-5-[(5-phosphoribosylamino)methylideneamino]imidazole-4-carboxamide isomerase"/>
    <property type="match status" value="1"/>
</dbReference>
<dbReference type="NCBIfam" id="NF010112">
    <property type="entry name" value="PRK13585.1"/>
    <property type="match status" value="1"/>
</dbReference>
<dbReference type="PANTHER" id="PTHR43090">
    <property type="entry name" value="1-(5-PHOSPHORIBOSYL)-5-[(5-PHOSPHORIBOSYLAMINO)METHYLIDENEAMINO] IMIDAZOLE-4-CARBOXAMIDE ISOMERASE"/>
    <property type="match status" value="1"/>
</dbReference>
<dbReference type="PANTHER" id="PTHR43090:SF2">
    <property type="entry name" value="1-(5-PHOSPHORIBOSYL)-5-[(5-PHOSPHORIBOSYLAMINO)METHYLIDENEAMINO] IMIDAZOLE-4-CARBOXAMIDE ISOMERASE"/>
    <property type="match status" value="1"/>
</dbReference>
<dbReference type="Pfam" id="PF00977">
    <property type="entry name" value="His_biosynth"/>
    <property type="match status" value="1"/>
</dbReference>
<dbReference type="SUPFAM" id="SSF51366">
    <property type="entry name" value="Ribulose-phoshate binding barrel"/>
    <property type="match status" value="1"/>
</dbReference>
<feature type="chain" id="PRO_1000213229" description="1-(5-phosphoribosyl)-5-[(5-phosphoribosylamino)methylideneamino] imidazole-4-carboxamide isomerase">
    <location>
        <begin position="1"/>
        <end position="243"/>
    </location>
</feature>
<feature type="active site" description="Proton acceptor" evidence="1">
    <location>
        <position position="8"/>
    </location>
</feature>
<feature type="active site" description="Proton donor" evidence="1">
    <location>
        <position position="129"/>
    </location>
</feature>
<name>HIS4_GEOSM</name>
<gene>
    <name evidence="1" type="primary">hisA</name>
    <name type="ordered locus">GM21_3796</name>
</gene>
<evidence type="ECO:0000255" key="1">
    <source>
        <dbReference type="HAMAP-Rule" id="MF_01014"/>
    </source>
</evidence>
<comment type="catalytic activity">
    <reaction evidence="1">
        <text>1-(5-phospho-beta-D-ribosyl)-5-[(5-phospho-beta-D-ribosylamino)methylideneamino]imidazole-4-carboxamide = 5-[(5-phospho-1-deoxy-D-ribulos-1-ylimino)methylamino]-1-(5-phospho-beta-D-ribosyl)imidazole-4-carboxamide</text>
        <dbReference type="Rhea" id="RHEA:15469"/>
        <dbReference type="ChEBI" id="CHEBI:58435"/>
        <dbReference type="ChEBI" id="CHEBI:58525"/>
        <dbReference type="EC" id="5.3.1.16"/>
    </reaction>
</comment>
<comment type="pathway">
    <text evidence="1">Amino-acid biosynthesis; L-histidine biosynthesis; L-histidine from 5-phospho-alpha-D-ribose 1-diphosphate: step 4/9.</text>
</comment>
<comment type="subcellular location">
    <subcellularLocation>
        <location evidence="1">Cytoplasm</location>
    </subcellularLocation>
</comment>
<comment type="similarity">
    <text evidence="1">Belongs to the HisA/HisF family.</text>
</comment>
<sequence length="243" mass="25412">MIIIPAIDLKNGCCVRLEQGLMEKDTVFNDDPGAQAVEWQRQGGEILHIVDLDGAFAGEPKNRSAIEAIVKSVTIPTQLGGGIRDIATIEAYLSLGIGRVIIGTAAQRNPAFVKEACAKFPGKIVVGIDAKNGMVAVQGWAEVTGITATELARQFEGDGVSAIIYTDISRDGMMQGPNIQATKALAEAIKIPVIASGGLSSLQDIENLIAIESSGVTGVITGKAIYSGAINLAEAIALTKKQR</sequence>
<accession>C6E7F5</accession>
<keyword id="KW-0028">Amino-acid biosynthesis</keyword>
<keyword id="KW-0963">Cytoplasm</keyword>
<keyword id="KW-0368">Histidine biosynthesis</keyword>
<keyword id="KW-0413">Isomerase</keyword>
<protein>
    <recommendedName>
        <fullName evidence="1">1-(5-phosphoribosyl)-5-[(5-phosphoribosylamino)methylideneamino] imidazole-4-carboxamide isomerase</fullName>
        <ecNumber evidence="1">5.3.1.16</ecNumber>
    </recommendedName>
    <alternativeName>
        <fullName evidence="1">Phosphoribosylformimino-5-aminoimidazole carboxamide ribotide isomerase</fullName>
    </alternativeName>
</protein>
<reference key="1">
    <citation type="submission" date="2009-07" db="EMBL/GenBank/DDBJ databases">
        <title>Complete sequence of Geobacter sp. M21.</title>
        <authorList>
            <consortium name="US DOE Joint Genome Institute"/>
            <person name="Lucas S."/>
            <person name="Copeland A."/>
            <person name="Lapidus A."/>
            <person name="Glavina del Rio T."/>
            <person name="Dalin E."/>
            <person name="Tice H."/>
            <person name="Bruce D."/>
            <person name="Goodwin L."/>
            <person name="Pitluck S."/>
            <person name="Saunders E."/>
            <person name="Brettin T."/>
            <person name="Detter J.C."/>
            <person name="Han C."/>
            <person name="Larimer F."/>
            <person name="Land M."/>
            <person name="Hauser L."/>
            <person name="Kyrpides N."/>
            <person name="Ovchinnikova G."/>
            <person name="Lovley D."/>
        </authorList>
    </citation>
    <scope>NUCLEOTIDE SEQUENCE [LARGE SCALE GENOMIC DNA]</scope>
    <source>
        <strain>M21</strain>
    </source>
</reference>
<organism>
    <name type="scientific">Geobacter sp. (strain M21)</name>
    <dbReference type="NCBI Taxonomy" id="443144"/>
    <lineage>
        <taxon>Bacteria</taxon>
        <taxon>Pseudomonadati</taxon>
        <taxon>Thermodesulfobacteriota</taxon>
        <taxon>Desulfuromonadia</taxon>
        <taxon>Geobacterales</taxon>
        <taxon>Geobacteraceae</taxon>
        <taxon>Geobacter</taxon>
    </lineage>
</organism>
<proteinExistence type="inferred from homology"/>